<sequence>MNLAAYFPVLLFLVVGTGLGVALVSIGKILGPNKPDTEKNAPYECGFEAFEDARMKFDVRYYLVAILFIIFDLETAFLFPWGVALRDIGWPGFLAMMIFLLEFLLGFAYIWKKGGLDWE</sequence>
<evidence type="ECO:0000255" key="1">
    <source>
        <dbReference type="HAMAP-Rule" id="MF_01394"/>
    </source>
</evidence>
<gene>
    <name evidence="1" type="primary">nuoA</name>
    <name type="ordered locus">Bphyt_1343</name>
</gene>
<organism>
    <name type="scientific">Paraburkholderia phytofirmans (strain DSM 17436 / LMG 22146 / PsJN)</name>
    <name type="common">Burkholderia phytofirmans</name>
    <dbReference type="NCBI Taxonomy" id="398527"/>
    <lineage>
        <taxon>Bacteria</taxon>
        <taxon>Pseudomonadati</taxon>
        <taxon>Pseudomonadota</taxon>
        <taxon>Betaproteobacteria</taxon>
        <taxon>Burkholderiales</taxon>
        <taxon>Burkholderiaceae</taxon>
        <taxon>Paraburkholderia</taxon>
    </lineage>
</organism>
<name>NUOA_PARPJ</name>
<protein>
    <recommendedName>
        <fullName evidence="1">NADH-quinone oxidoreductase subunit A</fullName>
        <ecNumber evidence="1">7.1.1.-</ecNumber>
    </recommendedName>
    <alternativeName>
        <fullName evidence="1">NADH dehydrogenase I subunit A</fullName>
    </alternativeName>
    <alternativeName>
        <fullName evidence="1">NDH-1 subunit A</fullName>
    </alternativeName>
    <alternativeName>
        <fullName evidence="1">NUO1</fullName>
    </alternativeName>
</protein>
<dbReference type="EC" id="7.1.1.-" evidence="1"/>
<dbReference type="EMBL" id="CP001052">
    <property type="protein sequence ID" value="ACD15758.1"/>
    <property type="molecule type" value="Genomic_DNA"/>
</dbReference>
<dbReference type="RefSeq" id="WP_012432376.1">
    <property type="nucleotide sequence ID" value="NC_010681.1"/>
</dbReference>
<dbReference type="SMR" id="B2T2E7"/>
<dbReference type="STRING" id="398527.Bphyt_1343"/>
<dbReference type="KEGG" id="bpy:Bphyt_1343"/>
<dbReference type="eggNOG" id="COG0838">
    <property type="taxonomic scope" value="Bacteria"/>
</dbReference>
<dbReference type="HOGENOM" id="CLU_119549_3_1_4"/>
<dbReference type="OrthoDB" id="9791970at2"/>
<dbReference type="Proteomes" id="UP000001739">
    <property type="component" value="Chromosome 1"/>
</dbReference>
<dbReference type="GO" id="GO:0030964">
    <property type="term" value="C:NADH dehydrogenase complex"/>
    <property type="evidence" value="ECO:0007669"/>
    <property type="project" value="TreeGrafter"/>
</dbReference>
<dbReference type="GO" id="GO:0005886">
    <property type="term" value="C:plasma membrane"/>
    <property type="evidence" value="ECO:0007669"/>
    <property type="project" value="UniProtKB-SubCell"/>
</dbReference>
<dbReference type="GO" id="GO:0008137">
    <property type="term" value="F:NADH dehydrogenase (ubiquinone) activity"/>
    <property type="evidence" value="ECO:0007669"/>
    <property type="project" value="InterPro"/>
</dbReference>
<dbReference type="GO" id="GO:0050136">
    <property type="term" value="F:NADH:ubiquinone reductase (non-electrogenic) activity"/>
    <property type="evidence" value="ECO:0007669"/>
    <property type="project" value="UniProtKB-UniRule"/>
</dbReference>
<dbReference type="GO" id="GO:0048038">
    <property type="term" value="F:quinone binding"/>
    <property type="evidence" value="ECO:0007669"/>
    <property type="project" value="UniProtKB-KW"/>
</dbReference>
<dbReference type="FunFam" id="1.20.58.1610:FF:000004">
    <property type="entry name" value="NADH-quinone oxidoreductase subunit A"/>
    <property type="match status" value="1"/>
</dbReference>
<dbReference type="Gene3D" id="1.20.58.1610">
    <property type="entry name" value="NADH:ubiquinone/plastoquinone oxidoreductase, chain 3"/>
    <property type="match status" value="1"/>
</dbReference>
<dbReference type="HAMAP" id="MF_01394">
    <property type="entry name" value="NDH1_NuoA"/>
    <property type="match status" value="1"/>
</dbReference>
<dbReference type="InterPro" id="IPR023043">
    <property type="entry name" value="NAD(P)H_OxRDtase_bac/plastid"/>
</dbReference>
<dbReference type="InterPro" id="IPR000440">
    <property type="entry name" value="NADH_UbQ/plastoQ_OxRdtase_su3"/>
</dbReference>
<dbReference type="InterPro" id="IPR038430">
    <property type="entry name" value="NDAH_ubi_oxred_su3_sf"/>
</dbReference>
<dbReference type="PANTHER" id="PTHR11058">
    <property type="entry name" value="NADH-UBIQUINONE OXIDOREDUCTASE CHAIN 3"/>
    <property type="match status" value="1"/>
</dbReference>
<dbReference type="PANTHER" id="PTHR11058:SF9">
    <property type="entry name" value="NADH-UBIQUINONE OXIDOREDUCTASE CHAIN 3"/>
    <property type="match status" value="1"/>
</dbReference>
<dbReference type="Pfam" id="PF00507">
    <property type="entry name" value="Oxidored_q4"/>
    <property type="match status" value="1"/>
</dbReference>
<feature type="chain" id="PRO_0000362644" description="NADH-quinone oxidoreductase subunit A">
    <location>
        <begin position="1"/>
        <end position="119"/>
    </location>
</feature>
<feature type="transmembrane region" description="Helical" evidence="1">
    <location>
        <begin position="7"/>
        <end position="27"/>
    </location>
</feature>
<feature type="transmembrane region" description="Helical" evidence="1">
    <location>
        <begin position="63"/>
        <end position="83"/>
    </location>
</feature>
<feature type="transmembrane region" description="Helical" evidence="1">
    <location>
        <begin position="88"/>
        <end position="108"/>
    </location>
</feature>
<keyword id="KW-0997">Cell inner membrane</keyword>
<keyword id="KW-1003">Cell membrane</keyword>
<keyword id="KW-0472">Membrane</keyword>
<keyword id="KW-0520">NAD</keyword>
<keyword id="KW-0874">Quinone</keyword>
<keyword id="KW-1278">Translocase</keyword>
<keyword id="KW-0812">Transmembrane</keyword>
<keyword id="KW-1133">Transmembrane helix</keyword>
<keyword id="KW-0813">Transport</keyword>
<keyword id="KW-0830">Ubiquinone</keyword>
<proteinExistence type="inferred from homology"/>
<comment type="function">
    <text evidence="1">NDH-1 shuttles electrons from NADH, via FMN and iron-sulfur (Fe-S) centers, to quinones in the respiratory chain. The immediate electron acceptor for the enzyme in this species is believed to be ubiquinone. Couples the redox reaction to proton translocation (for every two electrons transferred, four hydrogen ions are translocated across the cytoplasmic membrane), and thus conserves the redox energy in a proton gradient.</text>
</comment>
<comment type="catalytic activity">
    <reaction evidence="1">
        <text>a quinone + NADH + 5 H(+)(in) = a quinol + NAD(+) + 4 H(+)(out)</text>
        <dbReference type="Rhea" id="RHEA:57888"/>
        <dbReference type="ChEBI" id="CHEBI:15378"/>
        <dbReference type="ChEBI" id="CHEBI:24646"/>
        <dbReference type="ChEBI" id="CHEBI:57540"/>
        <dbReference type="ChEBI" id="CHEBI:57945"/>
        <dbReference type="ChEBI" id="CHEBI:132124"/>
    </reaction>
</comment>
<comment type="subunit">
    <text evidence="1">NDH-1 is composed of 14 different subunits. Subunits NuoA, H, J, K, L, M, N constitute the membrane sector of the complex.</text>
</comment>
<comment type="subcellular location">
    <subcellularLocation>
        <location evidence="1">Cell inner membrane</location>
        <topology evidence="1">Multi-pass membrane protein</topology>
    </subcellularLocation>
</comment>
<comment type="similarity">
    <text evidence="1">Belongs to the complex I subunit 3 family.</text>
</comment>
<reference key="1">
    <citation type="journal article" date="2011" name="J. Bacteriol.">
        <title>Complete genome sequence of the plant growth-promoting endophyte Burkholderia phytofirmans strain PsJN.</title>
        <authorList>
            <person name="Weilharter A."/>
            <person name="Mitter B."/>
            <person name="Shin M.V."/>
            <person name="Chain P.S."/>
            <person name="Nowak J."/>
            <person name="Sessitsch A."/>
        </authorList>
    </citation>
    <scope>NUCLEOTIDE SEQUENCE [LARGE SCALE GENOMIC DNA]</scope>
    <source>
        <strain>DSM 17436 / LMG 22146 / PsJN</strain>
    </source>
</reference>
<accession>B2T2E7</accession>